<sequence>MRLSRYFMPVLKEDPKEAQIVSHRLMLRAGMIKQQAAGIYSWLPLGYKVLRRIEQIVHEEQARAGHIAMLMPTLQSADLWRESGRYDDYGEEMLRIKDRHKRDLLYGPTNEEMITDIFRSHVNSYKDLPLTLYHVQWKFRDEIRPRFGVMRGREFLMKDGYNFDLTKEDALHAYNRHLVSYLRTYERMGLQAIPMRADGGPIGGDYTHEFLVLAETGESEVFYDSEITDLKFGDRRIDYDDVAQCRAVLEEFTSRYARTDETHDAALFEQIPKERRRVARGIEVGQIFYFGTKYSEPMGATVVGPDGSRVPVHMGSHGIGVSRLLGAIIEASHDDRGIIWPEGVTPFHVGIVNLKQGDASTDGACEALYAELKAQGLDALYDDRDERAGAKFATMDLVGLPWRITVGPRGLAANKVELTSRRTGESVEMSPQEAVVRLREIYQPVFDAAK</sequence>
<dbReference type="EC" id="6.1.1.15" evidence="1"/>
<dbReference type="EMBL" id="CP000489">
    <property type="protein sequence ID" value="ABL69404.1"/>
    <property type="molecule type" value="Genomic_DNA"/>
</dbReference>
<dbReference type="RefSeq" id="WP_011747622.1">
    <property type="nucleotide sequence ID" value="NC_008686.1"/>
</dbReference>
<dbReference type="SMR" id="A1B1L0"/>
<dbReference type="STRING" id="318586.Pden_1299"/>
<dbReference type="EnsemblBacteria" id="ABL69404">
    <property type="protein sequence ID" value="ABL69404"/>
    <property type="gene ID" value="Pden_1299"/>
</dbReference>
<dbReference type="GeneID" id="93452512"/>
<dbReference type="KEGG" id="pde:Pden_1299"/>
<dbReference type="eggNOG" id="COG0442">
    <property type="taxonomic scope" value="Bacteria"/>
</dbReference>
<dbReference type="HOGENOM" id="CLU_016739_4_2_5"/>
<dbReference type="OrthoDB" id="9809052at2"/>
<dbReference type="Proteomes" id="UP000000361">
    <property type="component" value="Chromosome 1"/>
</dbReference>
<dbReference type="GO" id="GO:0005829">
    <property type="term" value="C:cytosol"/>
    <property type="evidence" value="ECO:0007669"/>
    <property type="project" value="TreeGrafter"/>
</dbReference>
<dbReference type="GO" id="GO:0005524">
    <property type="term" value="F:ATP binding"/>
    <property type="evidence" value="ECO:0007669"/>
    <property type="project" value="UniProtKB-UniRule"/>
</dbReference>
<dbReference type="GO" id="GO:0004827">
    <property type="term" value="F:proline-tRNA ligase activity"/>
    <property type="evidence" value="ECO:0007669"/>
    <property type="project" value="UniProtKB-UniRule"/>
</dbReference>
<dbReference type="GO" id="GO:0006433">
    <property type="term" value="P:prolyl-tRNA aminoacylation"/>
    <property type="evidence" value="ECO:0007669"/>
    <property type="project" value="UniProtKB-UniRule"/>
</dbReference>
<dbReference type="CDD" id="cd00861">
    <property type="entry name" value="ProRS_anticodon_short"/>
    <property type="match status" value="1"/>
</dbReference>
<dbReference type="CDD" id="cd00779">
    <property type="entry name" value="ProRS_core_prok"/>
    <property type="match status" value="1"/>
</dbReference>
<dbReference type="FunFam" id="3.30.930.10:FF:000042">
    <property type="entry name" value="probable proline--tRNA ligase, mitochondrial"/>
    <property type="match status" value="1"/>
</dbReference>
<dbReference type="FunFam" id="3.40.50.800:FF:000032">
    <property type="entry name" value="Proline--tRNA ligase"/>
    <property type="match status" value="1"/>
</dbReference>
<dbReference type="Gene3D" id="3.40.50.800">
    <property type="entry name" value="Anticodon-binding domain"/>
    <property type="match status" value="1"/>
</dbReference>
<dbReference type="Gene3D" id="3.30.930.10">
    <property type="entry name" value="Bira Bifunctional Protein, Domain 2"/>
    <property type="match status" value="1"/>
</dbReference>
<dbReference type="HAMAP" id="MF_01570">
    <property type="entry name" value="Pro_tRNA_synth_type2"/>
    <property type="match status" value="1"/>
</dbReference>
<dbReference type="InterPro" id="IPR002314">
    <property type="entry name" value="aa-tRNA-synt_IIb"/>
</dbReference>
<dbReference type="InterPro" id="IPR006195">
    <property type="entry name" value="aa-tRNA-synth_II"/>
</dbReference>
<dbReference type="InterPro" id="IPR045864">
    <property type="entry name" value="aa-tRNA-synth_II/BPL/LPL"/>
</dbReference>
<dbReference type="InterPro" id="IPR004154">
    <property type="entry name" value="Anticodon-bd"/>
</dbReference>
<dbReference type="InterPro" id="IPR036621">
    <property type="entry name" value="Anticodon-bd_dom_sf"/>
</dbReference>
<dbReference type="InterPro" id="IPR002316">
    <property type="entry name" value="Pro-tRNA-ligase_IIa"/>
</dbReference>
<dbReference type="InterPro" id="IPR004500">
    <property type="entry name" value="Pro-tRNA-synth_IIa_bac-type"/>
</dbReference>
<dbReference type="InterPro" id="IPR050062">
    <property type="entry name" value="Pro-tRNA_synthetase"/>
</dbReference>
<dbReference type="InterPro" id="IPR023716">
    <property type="entry name" value="Prolyl-tRNA_ligase_IIa_type2"/>
</dbReference>
<dbReference type="InterPro" id="IPR044140">
    <property type="entry name" value="ProRS_anticodon_short"/>
</dbReference>
<dbReference type="InterPro" id="IPR033730">
    <property type="entry name" value="ProRS_core_prok"/>
</dbReference>
<dbReference type="NCBIfam" id="NF008979">
    <property type="entry name" value="PRK12325.1"/>
    <property type="match status" value="1"/>
</dbReference>
<dbReference type="NCBIfam" id="TIGR00409">
    <property type="entry name" value="proS_fam_II"/>
    <property type="match status" value="1"/>
</dbReference>
<dbReference type="PANTHER" id="PTHR42753">
    <property type="entry name" value="MITOCHONDRIAL RIBOSOME PROTEIN L39/PROLYL-TRNA LIGASE FAMILY MEMBER"/>
    <property type="match status" value="1"/>
</dbReference>
<dbReference type="PANTHER" id="PTHR42753:SF2">
    <property type="entry name" value="PROLINE--TRNA LIGASE"/>
    <property type="match status" value="1"/>
</dbReference>
<dbReference type="Pfam" id="PF03129">
    <property type="entry name" value="HGTP_anticodon"/>
    <property type="match status" value="1"/>
</dbReference>
<dbReference type="Pfam" id="PF00587">
    <property type="entry name" value="tRNA-synt_2b"/>
    <property type="match status" value="1"/>
</dbReference>
<dbReference type="PRINTS" id="PR01046">
    <property type="entry name" value="TRNASYNTHPRO"/>
</dbReference>
<dbReference type="SUPFAM" id="SSF52954">
    <property type="entry name" value="Class II aaRS ABD-related"/>
    <property type="match status" value="1"/>
</dbReference>
<dbReference type="SUPFAM" id="SSF55681">
    <property type="entry name" value="Class II aaRS and biotin synthetases"/>
    <property type="match status" value="1"/>
</dbReference>
<dbReference type="PROSITE" id="PS50862">
    <property type="entry name" value="AA_TRNA_LIGASE_II"/>
    <property type="match status" value="1"/>
</dbReference>
<name>SYP_PARDP</name>
<protein>
    <recommendedName>
        <fullName evidence="1">Proline--tRNA ligase</fullName>
        <ecNumber evidence="1">6.1.1.15</ecNumber>
    </recommendedName>
    <alternativeName>
        <fullName evidence="1">Prolyl-tRNA synthetase</fullName>
        <shortName evidence="1">ProRS</shortName>
    </alternativeName>
</protein>
<feature type="chain" id="PRO_0000288399" description="Proline--tRNA ligase">
    <location>
        <begin position="1"/>
        <end position="450"/>
    </location>
</feature>
<organism>
    <name type="scientific">Paracoccus denitrificans (strain Pd 1222)</name>
    <dbReference type="NCBI Taxonomy" id="318586"/>
    <lineage>
        <taxon>Bacteria</taxon>
        <taxon>Pseudomonadati</taxon>
        <taxon>Pseudomonadota</taxon>
        <taxon>Alphaproteobacteria</taxon>
        <taxon>Rhodobacterales</taxon>
        <taxon>Paracoccaceae</taxon>
        <taxon>Paracoccus</taxon>
    </lineage>
</organism>
<comment type="function">
    <text evidence="1">Catalyzes the attachment of proline to tRNA(Pro) in a two-step reaction: proline is first activated by ATP to form Pro-AMP and then transferred to the acceptor end of tRNA(Pro).</text>
</comment>
<comment type="catalytic activity">
    <reaction evidence="1">
        <text>tRNA(Pro) + L-proline + ATP = L-prolyl-tRNA(Pro) + AMP + diphosphate</text>
        <dbReference type="Rhea" id="RHEA:14305"/>
        <dbReference type="Rhea" id="RHEA-COMP:9700"/>
        <dbReference type="Rhea" id="RHEA-COMP:9702"/>
        <dbReference type="ChEBI" id="CHEBI:30616"/>
        <dbReference type="ChEBI" id="CHEBI:33019"/>
        <dbReference type="ChEBI" id="CHEBI:60039"/>
        <dbReference type="ChEBI" id="CHEBI:78442"/>
        <dbReference type="ChEBI" id="CHEBI:78532"/>
        <dbReference type="ChEBI" id="CHEBI:456215"/>
        <dbReference type="EC" id="6.1.1.15"/>
    </reaction>
</comment>
<comment type="subunit">
    <text evidence="1">Homodimer.</text>
</comment>
<comment type="subcellular location">
    <subcellularLocation>
        <location evidence="1">Cytoplasm</location>
    </subcellularLocation>
</comment>
<comment type="similarity">
    <text evidence="1">Belongs to the class-II aminoacyl-tRNA synthetase family. ProS type 2 subfamily.</text>
</comment>
<proteinExistence type="inferred from homology"/>
<accession>A1B1L0</accession>
<keyword id="KW-0030">Aminoacyl-tRNA synthetase</keyword>
<keyword id="KW-0067">ATP-binding</keyword>
<keyword id="KW-0963">Cytoplasm</keyword>
<keyword id="KW-0436">Ligase</keyword>
<keyword id="KW-0547">Nucleotide-binding</keyword>
<keyword id="KW-0648">Protein biosynthesis</keyword>
<keyword id="KW-1185">Reference proteome</keyword>
<gene>
    <name evidence="1" type="primary">proS</name>
    <name type="ordered locus">Pden_1299</name>
</gene>
<reference key="1">
    <citation type="submission" date="2006-12" db="EMBL/GenBank/DDBJ databases">
        <title>Complete sequence of chromosome 1 of Paracoccus denitrificans PD1222.</title>
        <authorList>
            <person name="Copeland A."/>
            <person name="Lucas S."/>
            <person name="Lapidus A."/>
            <person name="Barry K."/>
            <person name="Detter J.C."/>
            <person name="Glavina del Rio T."/>
            <person name="Hammon N."/>
            <person name="Israni S."/>
            <person name="Dalin E."/>
            <person name="Tice H."/>
            <person name="Pitluck S."/>
            <person name="Munk A.C."/>
            <person name="Brettin T."/>
            <person name="Bruce D."/>
            <person name="Han C."/>
            <person name="Tapia R."/>
            <person name="Gilna P."/>
            <person name="Schmutz J."/>
            <person name="Larimer F."/>
            <person name="Land M."/>
            <person name="Hauser L."/>
            <person name="Kyrpides N."/>
            <person name="Lykidis A."/>
            <person name="Spiro S."/>
            <person name="Richardson D.J."/>
            <person name="Moir J.W.B."/>
            <person name="Ferguson S.J."/>
            <person name="van Spanning R.J.M."/>
            <person name="Richardson P."/>
        </authorList>
    </citation>
    <scope>NUCLEOTIDE SEQUENCE [LARGE SCALE GENOMIC DNA]</scope>
    <source>
        <strain>Pd 1222</strain>
    </source>
</reference>
<evidence type="ECO:0000255" key="1">
    <source>
        <dbReference type="HAMAP-Rule" id="MF_01570"/>
    </source>
</evidence>